<organism>
    <name type="scientific">Streptococcus pyogenes serotype M3 (strain ATCC BAA-595 / MGAS315)</name>
    <dbReference type="NCBI Taxonomy" id="198466"/>
    <lineage>
        <taxon>Bacteria</taxon>
        <taxon>Bacillati</taxon>
        <taxon>Bacillota</taxon>
        <taxon>Bacilli</taxon>
        <taxon>Lactobacillales</taxon>
        <taxon>Streptococcaceae</taxon>
        <taxon>Streptococcus</taxon>
    </lineage>
</organism>
<proteinExistence type="inferred from homology"/>
<feature type="chain" id="PRO_0000114276" description="Chromosomal replication initiator protein DnaA">
    <location>
        <begin position="1"/>
        <end position="451"/>
    </location>
</feature>
<feature type="region of interest" description="Domain I, interacts with DnaA modulators" evidence="1">
    <location>
        <begin position="1"/>
        <end position="77"/>
    </location>
</feature>
<feature type="region of interest" description="Domain II" evidence="1">
    <location>
        <begin position="77"/>
        <end position="110"/>
    </location>
</feature>
<feature type="region of interest" description="Domain III, AAA+ region" evidence="1">
    <location>
        <begin position="111"/>
        <end position="329"/>
    </location>
</feature>
<feature type="region of interest" description="Domain IV, binds dsDNA" evidence="1">
    <location>
        <begin position="330"/>
        <end position="451"/>
    </location>
</feature>
<feature type="binding site" evidence="1">
    <location>
        <position position="155"/>
    </location>
    <ligand>
        <name>ATP</name>
        <dbReference type="ChEBI" id="CHEBI:30616"/>
    </ligand>
</feature>
<feature type="binding site" evidence="1">
    <location>
        <position position="157"/>
    </location>
    <ligand>
        <name>ATP</name>
        <dbReference type="ChEBI" id="CHEBI:30616"/>
    </ligand>
</feature>
<feature type="binding site" evidence="1">
    <location>
        <position position="158"/>
    </location>
    <ligand>
        <name>ATP</name>
        <dbReference type="ChEBI" id="CHEBI:30616"/>
    </ligand>
</feature>
<feature type="binding site" evidence="1">
    <location>
        <position position="159"/>
    </location>
    <ligand>
        <name>ATP</name>
        <dbReference type="ChEBI" id="CHEBI:30616"/>
    </ligand>
</feature>
<name>DNAA_STRP3</name>
<accession>P0DA68</accession>
<accession>P0A3A5</accession>
<accession>Q9L572</accession>
<sequence length="451" mass="51665">MTENEQIFWNRVLELAQSQLKQATYEFFVHDARLLKVDKHIATIYLDQMKELFWEKNLKDVILTAGFEVYNAQISVDYVFEEDLMIEQNQTKINQKPKQQALNSLPTVTSDLNSKYSFENFIQGDENRWAVAASIAVANTPGTTYNPLFIWGGPGLGKTHLLNAIGNSVLLENPNARIKYITAENFINEFVIHIRLDTMDELKEKFRNLDLLLIDDIQSLAKKTLSGTQEEFFNTFNALHNNNKQIVLTSDRTPDHLNDLEDRLVTRFKWGLTVNITPPDFETRVAILTNKIQEYNFIFPQDTIEYLAGQFDSNVRDLEGALKDISLVANFKQIDTITVDIAAEAIRARKQDGPKMTVIPIEEIQAQVGKFYGVTVKEIKATKRTQNIVLARQVAMFLAREMTDNSLPKIGKEFGGRDHSTVLHAYNKIKNMISQDESLRIEIETIKNKIK</sequence>
<keyword id="KW-0067">ATP-binding</keyword>
<keyword id="KW-0963">Cytoplasm</keyword>
<keyword id="KW-0235">DNA replication</keyword>
<keyword id="KW-0238">DNA-binding</keyword>
<keyword id="KW-0446">Lipid-binding</keyword>
<keyword id="KW-0547">Nucleotide-binding</keyword>
<gene>
    <name evidence="1" type="primary">dnaA</name>
    <name type="ordered locus">SpyM3_0001</name>
</gene>
<comment type="function">
    <text evidence="1">Plays an essential role in the initiation and regulation of chromosomal replication. ATP-DnaA binds to the origin of replication (oriC) to initiate formation of the DNA replication initiation complex once per cell cycle. Binds the DnaA box (a 9 base pair repeat at the origin) and separates the double-stranded (ds)DNA. Forms a right-handed helical filament on oriC DNA; dsDNA binds to the exterior of the filament while single-stranded (ss)DNA is stabiized in the filament's interior. The ATP-DnaA-oriC complex binds and stabilizes one strand of the AT-rich DNA unwinding element (DUE), permitting loading of DNA polymerase. After initiation quickly degrades to an ADP-DnaA complex that is not apt for DNA replication. Binds acidic phospholipids.</text>
</comment>
<comment type="subunit">
    <text evidence="1">Oligomerizes as a right-handed, spiral filament on DNA at oriC.</text>
</comment>
<comment type="subcellular location">
    <subcellularLocation>
        <location evidence="1">Cytoplasm</location>
    </subcellularLocation>
</comment>
<comment type="domain">
    <text evidence="1">Domain I is involved in oligomerization and binding regulators, domain II is flexibile and of varying length in different bacteria, domain III forms the AAA+ region, while domain IV binds dsDNA.</text>
</comment>
<comment type="similarity">
    <text evidence="1">Belongs to the DnaA family.</text>
</comment>
<protein>
    <recommendedName>
        <fullName evidence="1">Chromosomal replication initiator protein DnaA</fullName>
    </recommendedName>
</protein>
<reference key="1">
    <citation type="journal article" date="2002" name="Proc. Natl. Acad. Sci. U.S.A.">
        <title>Genome sequence of a serotype M3 strain of group A Streptococcus: phage-encoded toxins, the high-virulence phenotype, and clone emergence.</title>
        <authorList>
            <person name="Beres S.B."/>
            <person name="Sylva G.L."/>
            <person name="Barbian K.D."/>
            <person name="Lei B."/>
            <person name="Hoff J.S."/>
            <person name="Mammarella N.D."/>
            <person name="Liu M.-Y."/>
            <person name="Smoot J.C."/>
            <person name="Porcella S.F."/>
            <person name="Parkins L.D."/>
            <person name="Campbell D.S."/>
            <person name="Smith T.M."/>
            <person name="McCormick J.K."/>
            <person name="Leung D.Y.M."/>
            <person name="Schlievert P.M."/>
            <person name="Musser J.M."/>
        </authorList>
    </citation>
    <scope>NUCLEOTIDE SEQUENCE [LARGE SCALE GENOMIC DNA]</scope>
    <source>
        <strain>ATCC BAA-595 / MGAS315</strain>
    </source>
</reference>
<evidence type="ECO:0000255" key="1">
    <source>
        <dbReference type="HAMAP-Rule" id="MF_00377"/>
    </source>
</evidence>
<dbReference type="EMBL" id="AE014074">
    <property type="protein sequence ID" value="AAM78608.1"/>
    <property type="molecule type" value="Genomic_DNA"/>
</dbReference>
<dbReference type="RefSeq" id="WP_002987659.1">
    <property type="nucleotide sequence ID" value="NC_004070.1"/>
</dbReference>
<dbReference type="SMR" id="P0DA68"/>
<dbReference type="GeneID" id="69899953"/>
<dbReference type="KEGG" id="spg:SpyM3_0001"/>
<dbReference type="HOGENOM" id="CLU_026910_3_2_9"/>
<dbReference type="Proteomes" id="UP000000564">
    <property type="component" value="Chromosome"/>
</dbReference>
<dbReference type="GO" id="GO:0005737">
    <property type="term" value="C:cytoplasm"/>
    <property type="evidence" value="ECO:0007669"/>
    <property type="project" value="UniProtKB-SubCell"/>
</dbReference>
<dbReference type="GO" id="GO:0005886">
    <property type="term" value="C:plasma membrane"/>
    <property type="evidence" value="ECO:0007669"/>
    <property type="project" value="TreeGrafter"/>
</dbReference>
<dbReference type="GO" id="GO:0005524">
    <property type="term" value="F:ATP binding"/>
    <property type="evidence" value="ECO:0007669"/>
    <property type="project" value="UniProtKB-UniRule"/>
</dbReference>
<dbReference type="GO" id="GO:0016887">
    <property type="term" value="F:ATP hydrolysis activity"/>
    <property type="evidence" value="ECO:0007669"/>
    <property type="project" value="InterPro"/>
</dbReference>
<dbReference type="GO" id="GO:0003688">
    <property type="term" value="F:DNA replication origin binding"/>
    <property type="evidence" value="ECO:0007669"/>
    <property type="project" value="UniProtKB-UniRule"/>
</dbReference>
<dbReference type="GO" id="GO:0008289">
    <property type="term" value="F:lipid binding"/>
    <property type="evidence" value="ECO:0007669"/>
    <property type="project" value="UniProtKB-KW"/>
</dbReference>
<dbReference type="GO" id="GO:0006270">
    <property type="term" value="P:DNA replication initiation"/>
    <property type="evidence" value="ECO:0007669"/>
    <property type="project" value="UniProtKB-UniRule"/>
</dbReference>
<dbReference type="GO" id="GO:0006275">
    <property type="term" value="P:regulation of DNA replication"/>
    <property type="evidence" value="ECO:0007669"/>
    <property type="project" value="UniProtKB-UniRule"/>
</dbReference>
<dbReference type="CDD" id="cd00009">
    <property type="entry name" value="AAA"/>
    <property type="match status" value="1"/>
</dbReference>
<dbReference type="CDD" id="cd06571">
    <property type="entry name" value="Bac_DnaA_C"/>
    <property type="match status" value="1"/>
</dbReference>
<dbReference type="FunFam" id="1.10.1750.10:FF:000002">
    <property type="entry name" value="Chromosomal replication initiator protein DnaA"/>
    <property type="match status" value="1"/>
</dbReference>
<dbReference type="FunFam" id="3.40.50.300:FF:000668">
    <property type="entry name" value="Chromosomal replication initiator protein DnaA"/>
    <property type="match status" value="1"/>
</dbReference>
<dbReference type="Gene3D" id="1.10.1750.10">
    <property type="match status" value="1"/>
</dbReference>
<dbReference type="Gene3D" id="1.10.8.60">
    <property type="match status" value="1"/>
</dbReference>
<dbReference type="Gene3D" id="3.40.50.300">
    <property type="entry name" value="P-loop containing nucleotide triphosphate hydrolases"/>
    <property type="match status" value="1"/>
</dbReference>
<dbReference type="HAMAP" id="MF_00377">
    <property type="entry name" value="DnaA_bact"/>
    <property type="match status" value="1"/>
</dbReference>
<dbReference type="InterPro" id="IPR003593">
    <property type="entry name" value="AAA+_ATPase"/>
</dbReference>
<dbReference type="InterPro" id="IPR001957">
    <property type="entry name" value="Chromosome_initiator_DnaA"/>
</dbReference>
<dbReference type="InterPro" id="IPR020591">
    <property type="entry name" value="Chromosome_initiator_DnaA-like"/>
</dbReference>
<dbReference type="InterPro" id="IPR018312">
    <property type="entry name" value="Chromosome_initiator_DnaA_CS"/>
</dbReference>
<dbReference type="InterPro" id="IPR013159">
    <property type="entry name" value="DnaA_C"/>
</dbReference>
<dbReference type="InterPro" id="IPR013317">
    <property type="entry name" value="DnaA_dom"/>
</dbReference>
<dbReference type="InterPro" id="IPR027417">
    <property type="entry name" value="P-loop_NTPase"/>
</dbReference>
<dbReference type="InterPro" id="IPR010921">
    <property type="entry name" value="Trp_repressor/repl_initiator"/>
</dbReference>
<dbReference type="NCBIfam" id="TIGR00362">
    <property type="entry name" value="DnaA"/>
    <property type="match status" value="1"/>
</dbReference>
<dbReference type="PANTHER" id="PTHR30050">
    <property type="entry name" value="CHROMOSOMAL REPLICATION INITIATOR PROTEIN DNAA"/>
    <property type="match status" value="1"/>
</dbReference>
<dbReference type="PANTHER" id="PTHR30050:SF2">
    <property type="entry name" value="CHROMOSOMAL REPLICATION INITIATOR PROTEIN DNAA"/>
    <property type="match status" value="1"/>
</dbReference>
<dbReference type="Pfam" id="PF00308">
    <property type="entry name" value="Bac_DnaA"/>
    <property type="match status" value="1"/>
</dbReference>
<dbReference type="Pfam" id="PF08299">
    <property type="entry name" value="Bac_DnaA_C"/>
    <property type="match status" value="1"/>
</dbReference>
<dbReference type="PRINTS" id="PR00051">
    <property type="entry name" value="DNAA"/>
</dbReference>
<dbReference type="SMART" id="SM00382">
    <property type="entry name" value="AAA"/>
    <property type="match status" value="1"/>
</dbReference>
<dbReference type="SMART" id="SM00760">
    <property type="entry name" value="Bac_DnaA_C"/>
    <property type="match status" value="1"/>
</dbReference>
<dbReference type="SUPFAM" id="SSF52540">
    <property type="entry name" value="P-loop containing nucleoside triphosphate hydrolases"/>
    <property type="match status" value="1"/>
</dbReference>
<dbReference type="SUPFAM" id="SSF48295">
    <property type="entry name" value="TrpR-like"/>
    <property type="match status" value="1"/>
</dbReference>
<dbReference type="PROSITE" id="PS01008">
    <property type="entry name" value="DNAA"/>
    <property type="match status" value="1"/>
</dbReference>